<dbReference type="EMBL" id="CM000127">
    <property type="protein sequence ID" value="EAY87628.1"/>
    <property type="molecule type" value="Genomic_DNA"/>
</dbReference>
<dbReference type="STRING" id="39946.A2X9W8"/>
<dbReference type="EnsemblPlants" id="BGIOSGA009097-TA">
    <property type="protein sequence ID" value="BGIOSGA009097-PA"/>
    <property type="gene ID" value="BGIOSGA009097"/>
</dbReference>
<dbReference type="EnsemblPlants" id="OsGoSa_02g0034460.01">
    <property type="protein sequence ID" value="OsGoSa_02g0034460.01"/>
    <property type="gene ID" value="OsGoSa_02g0034460"/>
</dbReference>
<dbReference type="EnsemblPlants" id="OsIR64_02g0034120.01">
    <property type="protein sequence ID" value="OsIR64_02g0034120.01"/>
    <property type="gene ID" value="OsIR64_02g0034120"/>
</dbReference>
<dbReference type="EnsemblPlants" id="OsKYG_02g0034200.01">
    <property type="protein sequence ID" value="OsKYG_02g0034200.01"/>
    <property type="gene ID" value="OsKYG_02g0034200"/>
</dbReference>
<dbReference type="EnsemblPlants" id="OsLaMu_02g0033990.01">
    <property type="protein sequence ID" value="OsLaMu_02g0033990.01"/>
    <property type="gene ID" value="OsLaMu_02g0033990"/>
</dbReference>
<dbReference type="EnsemblPlants" id="OsLima_02g0034370.01">
    <property type="protein sequence ID" value="OsLima_02g0034370.01"/>
    <property type="gene ID" value="OsLima_02g0034370"/>
</dbReference>
<dbReference type="EnsemblPlants" id="OsLiXu_02g0034400.01">
    <property type="protein sequence ID" value="OsLiXu_02g0034400.01"/>
    <property type="gene ID" value="OsLiXu_02g0034400"/>
</dbReference>
<dbReference type="EnsemblPlants" id="OsPr106_02g0034280.01">
    <property type="protein sequence ID" value="OsPr106_02g0034280.01"/>
    <property type="gene ID" value="OsPr106_02g0034280"/>
</dbReference>
<dbReference type="Gramene" id="BGIOSGA009097-TA">
    <property type="protein sequence ID" value="BGIOSGA009097-PA"/>
    <property type="gene ID" value="BGIOSGA009097"/>
</dbReference>
<dbReference type="Gramene" id="OsGoSa_02g0034460.01">
    <property type="protein sequence ID" value="OsGoSa_02g0034460.01"/>
    <property type="gene ID" value="OsGoSa_02g0034460"/>
</dbReference>
<dbReference type="Gramene" id="OsIR64_02g0034120.01">
    <property type="protein sequence ID" value="OsIR64_02g0034120.01"/>
    <property type="gene ID" value="OsIR64_02g0034120"/>
</dbReference>
<dbReference type="Gramene" id="OsKYG_02g0034200.01">
    <property type="protein sequence ID" value="OsKYG_02g0034200.01"/>
    <property type="gene ID" value="OsKYG_02g0034200"/>
</dbReference>
<dbReference type="Gramene" id="OsLaMu_02g0033990.01">
    <property type="protein sequence ID" value="OsLaMu_02g0033990.01"/>
    <property type="gene ID" value="OsLaMu_02g0033990"/>
</dbReference>
<dbReference type="Gramene" id="OsLima_02g0034370.01">
    <property type="protein sequence ID" value="OsLima_02g0034370.01"/>
    <property type="gene ID" value="OsLima_02g0034370"/>
</dbReference>
<dbReference type="Gramene" id="OsLiXu_02g0034400.01">
    <property type="protein sequence ID" value="OsLiXu_02g0034400.01"/>
    <property type="gene ID" value="OsLiXu_02g0034400"/>
</dbReference>
<dbReference type="Gramene" id="OsPr106_02g0034280.01">
    <property type="protein sequence ID" value="OsPr106_02g0034280.01"/>
    <property type="gene ID" value="OsPr106_02g0034280"/>
</dbReference>
<dbReference type="HOGENOM" id="CLU_062111_0_0_1"/>
<dbReference type="OMA" id="KYMRSKC"/>
<dbReference type="OrthoDB" id="685885at2759"/>
<dbReference type="Proteomes" id="UP000007015">
    <property type="component" value="Chromosome 2"/>
</dbReference>
<dbReference type="GO" id="GO:0005634">
    <property type="term" value="C:nucleus"/>
    <property type="evidence" value="ECO:0007669"/>
    <property type="project" value="InterPro"/>
</dbReference>
<dbReference type="GO" id="GO:0004861">
    <property type="term" value="F:cyclin-dependent protein serine/threonine kinase inhibitor activity"/>
    <property type="evidence" value="ECO:0007669"/>
    <property type="project" value="InterPro"/>
</dbReference>
<dbReference type="GO" id="GO:0051726">
    <property type="term" value="P:regulation of cell cycle"/>
    <property type="evidence" value="ECO:0007669"/>
    <property type="project" value="InterPro"/>
</dbReference>
<dbReference type="Gene3D" id="4.10.365.10">
    <property type="entry name" value="p27"/>
    <property type="match status" value="1"/>
</dbReference>
<dbReference type="InterPro" id="IPR003175">
    <property type="entry name" value="CDI_dom"/>
</dbReference>
<dbReference type="InterPro" id="IPR044898">
    <property type="entry name" value="CDI_dom_sf"/>
</dbReference>
<dbReference type="InterPro" id="IPR044275">
    <property type="entry name" value="KRP"/>
</dbReference>
<dbReference type="PANTHER" id="PTHR46776">
    <property type="entry name" value="CYCLIN-DEPENDENT KINASE INHIBITOR 4-RELATED"/>
    <property type="match status" value="1"/>
</dbReference>
<dbReference type="Pfam" id="PF02234">
    <property type="entry name" value="CDI"/>
    <property type="match status" value="1"/>
</dbReference>
<comment type="similarity">
    <text evidence="2">Belongs to the CDI family. ICK/KRP subfamily.</text>
</comment>
<reference key="1">
    <citation type="journal article" date="2005" name="PLoS Biol.">
        <title>The genomes of Oryza sativa: a history of duplications.</title>
        <authorList>
            <person name="Yu J."/>
            <person name="Wang J."/>
            <person name="Lin W."/>
            <person name="Li S."/>
            <person name="Li H."/>
            <person name="Zhou J."/>
            <person name="Ni P."/>
            <person name="Dong W."/>
            <person name="Hu S."/>
            <person name="Zeng C."/>
            <person name="Zhang J."/>
            <person name="Zhang Y."/>
            <person name="Li R."/>
            <person name="Xu Z."/>
            <person name="Li S."/>
            <person name="Li X."/>
            <person name="Zheng H."/>
            <person name="Cong L."/>
            <person name="Lin L."/>
            <person name="Yin J."/>
            <person name="Geng J."/>
            <person name="Li G."/>
            <person name="Shi J."/>
            <person name="Liu J."/>
            <person name="Lv H."/>
            <person name="Li J."/>
            <person name="Wang J."/>
            <person name="Deng Y."/>
            <person name="Ran L."/>
            <person name="Shi X."/>
            <person name="Wang X."/>
            <person name="Wu Q."/>
            <person name="Li C."/>
            <person name="Ren X."/>
            <person name="Wang J."/>
            <person name="Wang X."/>
            <person name="Li D."/>
            <person name="Liu D."/>
            <person name="Zhang X."/>
            <person name="Ji Z."/>
            <person name="Zhao W."/>
            <person name="Sun Y."/>
            <person name="Zhang Z."/>
            <person name="Bao J."/>
            <person name="Han Y."/>
            <person name="Dong L."/>
            <person name="Ji J."/>
            <person name="Chen P."/>
            <person name="Wu S."/>
            <person name="Liu J."/>
            <person name="Xiao Y."/>
            <person name="Bu D."/>
            <person name="Tan J."/>
            <person name="Yang L."/>
            <person name="Ye C."/>
            <person name="Zhang J."/>
            <person name="Xu J."/>
            <person name="Zhou Y."/>
            <person name="Yu Y."/>
            <person name="Zhang B."/>
            <person name="Zhuang S."/>
            <person name="Wei H."/>
            <person name="Liu B."/>
            <person name="Lei M."/>
            <person name="Yu H."/>
            <person name="Li Y."/>
            <person name="Xu H."/>
            <person name="Wei S."/>
            <person name="He X."/>
            <person name="Fang L."/>
            <person name="Zhang Z."/>
            <person name="Zhang Y."/>
            <person name="Huang X."/>
            <person name="Su Z."/>
            <person name="Tong W."/>
            <person name="Li J."/>
            <person name="Tong Z."/>
            <person name="Li S."/>
            <person name="Ye J."/>
            <person name="Wang L."/>
            <person name="Fang L."/>
            <person name="Lei T."/>
            <person name="Chen C.-S."/>
            <person name="Chen H.-C."/>
            <person name="Xu Z."/>
            <person name="Li H."/>
            <person name="Huang H."/>
            <person name="Zhang F."/>
            <person name="Xu H."/>
            <person name="Li N."/>
            <person name="Zhao C."/>
            <person name="Li S."/>
            <person name="Dong L."/>
            <person name="Huang Y."/>
            <person name="Li L."/>
            <person name="Xi Y."/>
            <person name="Qi Q."/>
            <person name="Li W."/>
            <person name="Zhang B."/>
            <person name="Hu W."/>
            <person name="Zhang Y."/>
            <person name="Tian X."/>
            <person name="Jiao Y."/>
            <person name="Liang X."/>
            <person name="Jin J."/>
            <person name="Gao L."/>
            <person name="Zheng W."/>
            <person name="Hao B."/>
            <person name="Liu S.-M."/>
            <person name="Wang W."/>
            <person name="Yuan L."/>
            <person name="Cao M."/>
            <person name="McDermott J."/>
            <person name="Samudrala R."/>
            <person name="Wang J."/>
            <person name="Wong G.K.-S."/>
            <person name="Yang H."/>
        </authorList>
    </citation>
    <scope>NUCLEOTIDE SEQUENCE [LARGE SCALE GENOMIC DNA]</scope>
    <source>
        <strain>cv. 93-11</strain>
    </source>
</reference>
<sequence length="262" mass="27138">MGKYMRKFRGATGEELAAMEVTQVVGVRTRSRSAAAAGATTTKVQAASAASTRRRKALLPTAVVGTTRRDGGSCYLQLRSRMLFMAPPRPAPAARAPVVAEAAGSGNGAAAHAAAGLSRCSSTASSVDAAAQDRSLACRSDVAEAGSEHVPEGSASDSASGRDRERRETTPSSFLPGEVSDLESDLAGGQKRSRPLPSAATASAQQATRPKIPPAAEIEAFFAAAEEAEAKRFAAKYNFDVVRGVPLDAGRFEWTPVVSSRS</sequence>
<name>KRP1_ORYSI</name>
<keyword id="KW-0649">Protein kinase inhibitor</keyword>
<keyword id="KW-1185">Reference proteome</keyword>
<gene>
    <name type="primary">KRP1</name>
    <name type="ORF">OsI_008861</name>
</gene>
<protein>
    <recommendedName>
        <fullName>Cyclin-dependent kinase inhibitor 1</fullName>
    </recommendedName>
    <alternativeName>
        <fullName>KIP-related protein 1</fullName>
    </alternativeName>
</protein>
<accession>A2X9W8</accession>
<feature type="chain" id="PRO_0000295664" description="Cyclin-dependent kinase inhibitor 1">
    <location>
        <begin position="1"/>
        <end position="262"/>
    </location>
</feature>
<feature type="region of interest" description="Disordered" evidence="1">
    <location>
        <begin position="140"/>
        <end position="212"/>
    </location>
</feature>
<feature type="compositionally biased region" description="Basic and acidic residues" evidence="1">
    <location>
        <begin position="160"/>
        <end position="169"/>
    </location>
</feature>
<feature type="compositionally biased region" description="Low complexity" evidence="1">
    <location>
        <begin position="198"/>
        <end position="208"/>
    </location>
</feature>
<proteinExistence type="inferred from homology"/>
<evidence type="ECO:0000256" key="1">
    <source>
        <dbReference type="SAM" id="MobiDB-lite"/>
    </source>
</evidence>
<evidence type="ECO:0000305" key="2"/>
<organism>
    <name type="scientific">Oryza sativa subsp. indica</name>
    <name type="common">Rice</name>
    <dbReference type="NCBI Taxonomy" id="39946"/>
    <lineage>
        <taxon>Eukaryota</taxon>
        <taxon>Viridiplantae</taxon>
        <taxon>Streptophyta</taxon>
        <taxon>Embryophyta</taxon>
        <taxon>Tracheophyta</taxon>
        <taxon>Spermatophyta</taxon>
        <taxon>Magnoliopsida</taxon>
        <taxon>Liliopsida</taxon>
        <taxon>Poales</taxon>
        <taxon>Poaceae</taxon>
        <taxon>BOP clade</taxon>
        <taxon>Oryzoideae</taxon>
        <taxon>Oryzeae</taxon>
        <taxon>Oryzinae</taxon>
        <taxon>Oryza</taxon>
        <taxon>Oryza sativa</taxon>
    </lineage>
</organism>